<protein>
    <recommendedName>
        <fullName>NAD kinase 2, mitochondrial</fullName>
        <ecNumber>2.7.1.23</ecNumber>
    </recommendedName>
    <alternativeName>
        <fullName>Mitochondrial NAD kinase</fullName>
    </alternativeName>
    <alternativeName>
        <fullName>NAD kinase domain-containing protein 1, mitochondrial</fullName>
    </alternativeName>
</protein>
<sequence length="425" mass="48116">MDTSAIQQTLVKIYQRQAWQPPRKASKNETTVGKPRELAGGGSPADGGFRPSRVVVVAKTTRYEFEQQRYRYAELSEEDLKQLLALKGSSYSGLLERHHIHTKNVEHIIDSLRDEGIEVRLVKRREYDEETVRWADAVIAAGGDGTMLLAASKVLDRLKPVIGVNTDPERSEGHLCLPVRYTHSFPEALQKFSRGEFRWLWRQRIRLYLEGTGINPSPVDLHEQQLSLNQHSRAFNIERVDDERSEASGPQLLPVRALNEVFIGESLSSRASYYEISVDDGPWEKQKSSGLNLCTGTGSKAWSFNINRVAAQAVEDVLNIARRQGNLTLPLNKELVEKVTNEYNESLLYSPEEPKILFSIREPIANRVFSSSRQRCFSSKVCVRSRCWDACMVVDGGTSFEFNDGAIASMMINKEDELRTVILEQ</sequence>
<reference key="1">
    <citation type="submission" date="2006-04" db="EMBL/GenBank/DDBJ databases">
        <title>A gene involved in the transition of the hepatocytes from quiescent to proliferating stages.</title>
        <authorList>
            <person name="Guo F."/>
            <person name="Zhang Z."/>
            <person name="Dai S."/>
            <person name="Wang X."/>
            <person name="Liu L."/>
            <person name="Liu C."/>
            <person name="Zhang H."/>
            <person name="Xiao X."/>
            <person name="He D."/>
        </authorList>
    </citation>
    <scope>NUCLEOTIDE SEQUENCE [MRNA]</scope>
    <source>
        <strain>Sprague-Dawley</strain>
        <tissue>Liver</tissue>
    </source>
</reference>
<reference key="2">
    <citation type="journal article" date="2004" name="Genome Res.">
        <title>The status, quality, and expansion of the NIH full-length cDNA project: the Mammalian Gene Collection (MGC).</title>
        <authorList>
            <consortium name="The MGC Project Team"/>
        </authorList>
    </citation>
    <scope>NUCLEOTIDE SEQUENCE [LARGE SCALE MRNA] OF 140-425</scope>
    <source>
        <tissue>Spleen</tissue>
    </source>
</reference>
<reference key="3">
    <citation type="journal article" date="2012" name="Nat. Commun.">
        <title>Quantitative maps of protein phosphorylation sites across 14 different rat organs and tissues.</title>
        <authorList>
            <person name="Lundby A."/>
            <person name="Secher A."/>
            <person name="Lage K."/>
            <person name="Nordsborg N.B."/>
            <person name="Dmytriyev A."/>
            <person name="Lundby C."/>
            <person name="Olsen J.V."/>
        </authorList>
    </citation>
    <scope>IDENTIFICATION BY MASS SPECTROMETRY [LARGE SCALE ANALYSIS]</scope>
</reference>
<keyword id="KW-0007">Acetylation</keyword>
<keyword id="KW-0067">ATP-binding</keyword>
<keyword id="KW-0418">Kinase</keyword>
<keyword id="KW-0496">Mitochondrion</keyword>
<keyword id="KW-0520">NAD</keyword>
<keyword id="KW-0521">NADP</keyword>
<keyword id="KW-0547">Nucleotide-binding</keyword>
<keyword id="KW-0597">Phosphoprotein</keyword>
<keyword id="KW-1185">Reference proteome</keyword>
<keyword id="KW-0808">Transferase</keyword>
<keyword id="KW-0809">Transit peptide</keyword>
<evidence type="ECO:0000250" key="1"/>
<evidence type="ECO:0000250" key="2">
    <source>
        <dbReference type="UniProtKB" id="Q4G0N4"/>
    </source>
</evidence>
<evidence type="ECO:0000250" key="3">
    <source>
        <dbReference type="UniProtKB" id="Q8C5H8"/>
    </source>
</evidence>
<evidence type="ECO:0000255" key="4"/>
<evidence type="ECO:0000256" key="5">
    <source>
        <dbReference type="SAM" id="MobiDB-lite"/>
    </source>
</evidence>
<evidence type="ECO:0000305" key="6"/>
<accession>Q1HCL7</accession>
<accession>Q3B8P3</accession>
<comment type="function">
    <text evidence="1">Mitochondrial NAD(+) kinase that phosphorylates NAD(+) to yield NADP(+). Can use both ATP or inorganic polyphosphate as the phosphoryl donor (By similarity).</text>
</comment>
<comment type="catalytic activity">
    <reaction>
        <text>NAD(+) + ATP = ADP + NADP(+) + H(+)</text>
        <dbReference type="Rhea" id="RHEA:18629"/>
        <dbReference type="ChEBI" id="CHEBI:15378"/>
        <dbReference type="ChEBI" id="CHEBI:30616"/>
        <dbReference type="ChEBI" id="CHEBI:57540"/>
        <dbReference type="ChEBI" id="CHEBI:58349"/>
        <dbReference type="ChEBI" id="CHEBI:456216"/>
        <dbReference type="EC" id="2.7.1.23"/>
    </reaction>
</comment>
<comment type="activity regulation">
    <text evidence="1">Inhibited by NADH, NADPH and NADP(+).</text>
</comment>
<comment type="subunit">
    <text evidence="1">Homodimer.</text>
</comment>
<comment type="subcellular location">
    <subcellularLocation>
        <location evidence="1">Mitochondrion</location>
    </subcellularLocation>
</comment>
<comment type="similarity">
    <text evidence="6">Belongs to the NAD kinase family.</text>
</comment>
<organism>
    <name type="scientific">Rattus norvegicus</name>
    <name type="common">Rat</name>
    <dbReference type="NCBI Taxonomy" id="10116"/>
    <lineage>
        <taxon>Eukaryota</taxon>
        <taxon>Metazoa</taxon>
        <taxon>Chordata</taxon>
        <taxon>Craniata</taxon>
        <taxon>Vertebrata</taxon>
        <taxon>Euteleostomi</taxon>
        <taxon>Mammalia</taxon>
        <taxon>Eutheria</taxon>
        <taxon>Euarchontoglires</taxon>
        <taxon>Glires</taxon>
        <taxon>Rodentia</taxon>
        <taxon>Myomorpha</taxon>
        <taxon>Muroidea</taxon>
        <taxon>Muridae</taxon>
        <taxon>Murinae</taxon>
        <taxon>Rattus</taxon>
    </lineage>
</organism>
<proteinExistence type="evidence at protein level"/>
<feature type="transit peptide" description="Mitochondrion" evidence="4">
    <location>
        <begin position="1"/>
        <end position="45"/>
    </location>
</feature>
<feature type="chain" id="PRO_0000296294" description="NAD kinase 2, mitochondrial">
    <location>
        <begin position="46"/>
        <end position="425"/>
    </location>
</feature>
<feature type="region of interest" description="Disordered" evidence="5">
    <location>
        <begin position="20"/>
        <end position="46"/>
    </location>
</feature>
<feature type="modified residue" description="N6-acetyllysine; alternate" evidence="3">
    <location>
        <position position="59"/>
    </location>
</feature>
<feature type="modified residue" description="N6-succinyllysine; alternate" evidence="3">
    <location>
        <position position="59"/>
    </location>
</feature>
<feature type="modified residue" description="Phosphoserine" evidence="2">
    <location>
        <position position="171"/>
    </location>
</feature>
<feature type="modified residue" description="N6-succinyllysine" evidence="3">
    <location>
        <position position="285"/>
    </location>
</feature>
<feature type="modified residue" description="N6-acetyllysine; alternate" evidence="3">
    <location>
        <position position="300"/>
    </location>
</feature>
<feature type="modified residue" description="N6-succinyllysine; alternate" evidence="3">
    <location>
        <position position="300"/>
    </location>
</feature>
<feature type="modified residue" description="Phosphoserine" evidence="2">
    <location>
        <position position="350"/>
    </location>
</feature>
<feature type="modified residue" description="N6-acetyllysine" evidence="3">
    <location>
        <position position="380"/>
    </location>
</feature>
<gene>
    <name type="primary">Nadk2</name>
    <name type="synonym">Mnadk</name>
    <name type="synonym">Nadkd1</name>
</gene>
<dbReference type="EC" id="2.7.1.23"/>
<dbReference type="EMBL" id="DQ504300">
    <property type="protein sequence ID" value="ABF56209.1"/>
    <property type="molecule type" value="mRNA"/>
</dbReference>
<dbReference type="EMBL" id="BC105901">
    <property type="protein sequence ID" value="AAI05902.1"/>
    <property type="molecule type" value="mRNA"/>
</dbReference>
<dbReference type="RefSeq" id="NP_001037717.1">
    <property type="nucleotide sequence ID" value="NM_001044252.2"/>
</dbReference>
<dbReference type="SMR" id="Q1HCL7"/>
<dbReference type="FunCoup" id="Q1HCL7">
    <property type="interactions" value="3408"/>
</dbReference>
<dbReference type="IntAct" id="Q1HCL7">
    <property type="interactions" value="1"/>
</dbReference>
<dbReference type="MINT" id="Q1HCL7"/>
<dbReference type="STRING" id="10116.ENSRNOP00000074419"/>
<dbReference type="iPTMnet" id="Q1HCL7"/>
<dbReference type="PhosphoSitePlus" id="Q1HCL7"/>
<dbReference type="PaxDb" id="10116-ENSRNOP00000022455"/>
<dbReference type="Ensembl" id="ENSRNOT00000083799.2">
    <property type="protein sequence ID" value="ENSRNOP00000074419.1"/>
    <property type="gene ID" value="ENSRNOG00000054157.2"/>
</dbReference>
<dbReference type="GeneID" id="365699"/>
<dbReference type="KEGG" id="rno:365699"/>
<dbReference type="AGR" id="RGD:1306809"/>
<dbReference type="CTD" id="133686"/>
<dbReference type="RGD" id="1306809">
    <property type="gene designation" value="Nadk2"/>
</dbReference>
<dbReference type="eggNOG" id="KOG4180">
    <property type="taxonomic scope" value="Eukaryota"/>
</dbReference>
<dbReference type="GeneTree" id="ENSGT00390000006320"/>
<dbReference type="InParanoid" id="Q1HCL7"/>
<dbReference type="OrthoDB" id="185618at2759"/>
<dbReference type="Reactome" id="R-RNO-196807">
    <property type="pathway name" value="Nicotinate metabolism"/>
</dbReference>
<dbReference type="Reactome" id="R-RNO-9837999">
    <property type="pathway name" value="Mitochondrial protein degradation"/>
</dbReference>
<dbReference type="PRO" id="PR:Q1HCL7"/>
<dbReference type="Proteomes" id="UP000002494">
    <property type="component" value="Chromosome 2"/>
</dbReference>
<dbReference type="Bgee" id="ENSRNOG00000054157">
    <property type="expression patterns" value="Expressed in liver and 19 other cell types or tissues"/>
</dbReference>
<dbReference type="ExpressionAtlas" id="Q1HCL7">
    <property type="expression patterns" value="baseline and differential"/>
</dbReference>
<dbReference type="GO" id="GO:0005739">
    <property type="term" value="C:mitochondrion"/>
    <property type="evidence" value="ECO:0000250"/>
    <property type="project" value="UniProtKB"/>
</dbReference>
<dbReference type="GO" id="GO:0005524">
    <property type="term" value="F:ATP binding"/>
    <property type="evidence" value="ECO:0007669"/>
    <property type="project" value="UniProtKB-KW"/>
</dbReference>
<dbReference type="GO" id="GO:0003951">
    <property type="term" value="F:NAD+ kinase activity"/>
    <property type="evidence" value="ECO:0000250"/>
    <property type="project" value="UniProtKB"/>
</dbReference>
<dbReference type="GO" id="GO:0042803">
    <property type="term" value="F:protein homodimerization activity"/>
    <property type="evidence" value="ECO:0000250"/>
    <property type="project" value="UniProtKB"/>
</dbReference>
<dbReference type="GO" id="GO:0019674">
    <property type="term" value="P:NAD metabolic process"/>
    <property type="evidence" value="ECO:0000250"/>
    <property type="project" value="UniProtKB"/>
</dbReference>
<dbReference type="GO" id="GO:0006741">
    <property type="term" value="P:NADP biosynthetic process"/>
    <property type="evidence" value="ECO:0007669"/>
    <property type="project" value="InterPro"/>
</dbReference>
<dbReference type="FunFam" id="3.40.50.10330:FF:000021">
    <property type="entry name" value="NAD kinase 2, mitochondrial"/>
    <property type="match status" value="1"/>
</dbReference>
<dbReference type="Gene3D" id="3.40.50.10330">
    <property type="entry name" value="Probable inorganic polyphosphate/atp-NAD kinase, domain 1"/>
    <property type="match status" value="1"/>
</dbReference>
<dbReference type="Gene3D" id="2.60.200.30">
    <property type="entry name" value="Probable inorganic polyphosphate/atp-NAD kinase, domain 2"/>
    <property type="match status" value="1"/>
</dbReference>
<dbReference type="InterPro" id="IPR017438">
    <property type="entry name" value="ATP-NAD_kinase_N"/>
</dbReference>
<dbReference type="InterPro" id="IPR017437">
    <property type="entry name" value="ATP-NAD_kinase_PpnK-typ_C"/>
</dbReference>
<dbReference type="InterPro" id="IPR016064">
    <property type="entry name" value="NAD/diacylglycerol_kinase_sf"/>
</dbReference>
<dbReference type="InterPro" id="IPR002504">
    <property type="entry name" value="NADK"/>
</dbReference>
<dbReference type="InterPro" id="IPR012355">
    <property type="entry name" value="NADK2_mit"/>
</dbReference>
<dbReference type="PANTHER" id="PTHR13158">
    <property type="match status" value="1"/>
</dbReference>
<dbReference type="PANTHER" id="PTHR13158:SF5">
    <property type="entry name" value="NAD KINASE 2, MITOCHONDRIAL"/>
    <property type="match status" value="1"/>
</dbReference>
<dbReference type="Pfam" id="PF01513">
    <property type="entry name" value="NAD_kinase"/>
    <property type="match status" value="1"/>
</dbReference>
<dbReference type="PIRSF" id="PIRSF017565">
    <property type="entry name" value="Kin_ATP-NAD_euk"/>
    <property type="match status" value="1"/>
</dbReference>
<dbReference type="SUPFAM" id="SSF111331">
    <property type="entry name" value="NAD kinase/diacylglycerol kinase-like"/>
    <property type="match status" value="1"/>
</dbReference>
<name>NADK2_RAT</name>